<feature type="chain" id="PRO_0000164941" description="DNA alpha-glucosyltransferase">
    <location>
        <begin position="1"/>
        <end position="400"/>
    </location>
</feature>
<feature type="strand" evidence="5">
    <location>
        <begin position="2"/>
        <end position="7"/>
    </location>
</feature>
<feature type="helix" evidence="5">
    <location>
        <begin position="15"/>
        <end position="29"/>
    </location>
</feature>
<feature type="strand" evidence="5">
    <location>
        <begin position="33"/>
        <end position="39"/>
    </location>
</feature>
<feature type="turn" evidence="5">
    <location>
        <begin position="45"/>
        <end position="48"/>
    </location>
</feature>
<feature type="strand" evidence="5">
    <location>
        <begin position="49"/>
        <end position="51"/>
    </location>
</feature>
<feature type="turn" evidence="5">
    <location>
        <begin position="53"/>
        <end position="55"/>
    </location>
</feature>
<feature type="strand" evidence="5">
    <location>
        <begin position="57"/>
        <end position="59"/>
    </location>
</feature>
<feature type="turn" evidence="5">
    <location>
        <begin position="61"/>
        <end position="63"/>
    </location>
</feature>
<feature type="helix" evidence="5">
    <location>
        <begin position="65"/>
        <end position="72"/>
    </location>
</feature>
<feature type="strand" evidence="5">
    <location>
        <begin position="76"/>
        <end position="82"/>
    </location>
</feature>
<feature type="helix" evidence="5">
    <location>
        <begin position="90"/>
        <end position="102"/>
    </location>
</feature>
<feature type="strand" evidence="5">
    <location>
        <begin position="107"/>
        <end position="113"/>
    </location>
</feature>
<feature type="helix" evidence="5">
    <location>
        <begin position="118"/>
        <end position="121"/>
    </location>
</feature>
<feature type="strand" evidence="5">
    <location>
        <begin position="124"/>
        <end position="126"/>
    </location>
</feature>
<feature type="helix" evidence="5">
    <location>
        <begin position="127"/>
        <end position="133"/>
    </location>
</feature>
<feature type="strand" evidence="5">
    <location>
        <begin position="135"/>
        <end position="140"/>
    </location>
</feature>
<feature type="strand" evidence="7">
    <location>
        <begin position="142"/>
        <end position="144"/>
    </location>
</feature>
<feature type="helix" evidence="5">
    <location>
        <begin position="145"/>
        <end position="148"/>
    </location>
</feature>
<feature type="helix" evidence="5">
    <location>
        <begin position="150"/>
        <end position="154"/>
    </location>
</feature>
<feature type="strand" evidence="5">
    <location>
        <begin position="161"/>
        <end position="163"/>
    </location>
</feature>
<feature type="strand" evidence="5">
    <location>
        <begin position="171"/>
        <end position="173"/>
    </location>
</feature>
<feature type="helix" evidence="5">
    <location>
        <begin position="180"/>
        <end position="187"/>
    </location>
</feature>
<feature type="helix" evidence="5">
    <location>
        <begin position="191"/>
        <end position="193"/>
    </location>
</feature>
<feature type="strand" evidence="5">
    <location>
        <begin position="195"/>
        <end position="202"/>
    </location>
</feature>
<feature type="helix" evidence="5">
    <location>
        <begin position="207"/>
        <end position="209"/>
    </location>
</feature>
<feature type="helix" evidence="5">
    <location>
        <begin position="211"/>
        <end position="220"/>
    </location>
</feature>
<feature type="turn" evidence="5">
    <location>
        <begin position="221"/>
        <end position="226"/>
    </location>
</feature>
<feature type="strand" evidence="5">
    <location>
        <begin position="228"/>
        <end position="232"/>
    </location>
</feature>
<feature type="helix" evidence="5">
    <location>
        <begin position="238"/>
        <end position="245"/>
    </location>
</feature>
<feature type="strand" evidence="5">
    <location>
        <begin position="250"/>
        <end position="253"/>
    </location>
</feature>
<feature type="helix" evidence="5">
    <location>
        <begin position="255"/>
        <end position="260"/>
    </location>
</feature>
<feature type="strand" evidence="5">
    <location>
        <begin position="264"/>
        <end position="266"/>
    </location>
</feature>
<feature type="strand" evidence="5">
    <location>
        <begin position="269"/>
        <end position="273"/>
    </location>
</feature>
<feature type="helix" evidence="5">
    <location>
        <begin position="277"/>
        <end position="285"/>
    </location>
</feature>
<feature type="strand" evidence="5">
    <location>
        <begin position="287"/>
        <end position="292"/>
    </location>
</feature>
<feature type="helix" evidence="5">
    <location>
        <begin position="298"/>
        <end position="300"/>
    </location>
</feature>
<feature type="helix" evidence="5">
    <location>
        <begin position="307"/>
        <end position="315"/>
    </location>
</feature>
<feature type="strand" evidence="5">
    <location>
        <begin position="317"/>
        <end position="322"/>
    </location>
</feature>
<feature type="helix" evidence="5">
    <location>
        <begin position="323"/>
        <end position="328"/>
    </location>
</feature>
<feature type="turn" evidence="5">
    <location>
        <begin position="332"/>
        <end position="334"/>
    </location>
</feature>
<feature type="helix" evidence="5">
    <location>
        <begin position="338"/>
        <end position="340"/>
    </location>
</feature>
<feature type="strand" evidence="5">
    <location>
        <begin position="346"/>
        <end position="348"/>
    </location>
</feature>
<feature type="helix" evidence="6">
    <location>
        <begin position="350"/>
        <end position="352"/>
    </location>
</feature>
<feature type="helix" evidence="5">
    <location>
        <begin position="353"/>
        <end position="364"/>
    </location>
</feature>
<feature type="helix" evidence="5">
    <location>
        <begin position="367"/>
        <end position="385"/>
    </location>
</feature>
<feature type="helix" evidence="5">
    <location>
        <begin position="387"/>
        <end position="398"/>
    </location>
</feature>
<organismHost>
    <name type="scientific">Escherichia coli</name>
    <dbReference type="NCBI Taxonomy" id="562"/>
</organismHost>
<name>GSTA_BPT4</name>
<reference key="1">
    <citation type="journal article" date="1985" name="EMBO J.">
        <title>Genes 55, alpha gt, 47 and 46 of bacteriophage T4: the genomic organization as deduced by sequence analysis.</title>
        <authorList>
            <person name="Gram H."/>
            <person name="Rueger W."/>
        </authorList>
    </citation>
    <scope>NUCLEOTIDE SEQUENCE [GENOMIC DNA]</scope>
</reference>
<reference key="2">
    <citation type="journal article" date="2003" name="Microbiol. Mol. Biol. Rev.">
        <title>Bacteriophage T4 genome.</title>
        <authorList>
            <person name="Miller E.S."/>
            <person name="Kutter E."/>
            <person name="Mosig G."/>
            <person name="Arisaka F."/>
            <person name="Kunisawa T."/>
            <person name="Ruger W."/>
        </authorList>
    </citation>
    <scope>NUCLEOTIDE SEQUENCE [LARGE SCALE GENOMIC DNA]</scope>
</reference>
<reference key="3">
    <citation type="journal article" date="1967" name="Eur. J. Biochem.">
        <title>On the specificity of bacteriophage-induced hydroxymethylcytosine glucosyltransferases. II. Specificities of hydroxymethylcytosine alphaand beta-glucosyltransferases induced by bacteriophage T4.</title>
        <authorList>
            <person name="de Waard A."/>
            <person name="Ubbink T.E."/>
            <person name="Beukman W."/>
        </authorList>
    </citation>
    <scope>CATALYTIC ACTIVITY</scope>
</reference>
<reference key="4">
    <citation type="journal article" date="2004" name="Biochem. Biophys. Res. Commun.">
        <title>Bacteriophage T4 alpha-glucosyltransferase: a novel interaction with gp45 and aspects of the catalytic mechanism.</title>
        <authorList>
            <person name="Sommer N."/>
            <person name="Depping R."/>
            <person name="Piotrowski M."/>
            <person name="Ruger W."/>
        </authorList>
    </citation>
    <scope>FUNCTION</scope>
    <scope>INTERACTION WITH GP45</scope>
</reference>
<reference key="5">
    <citation type="journal article" date="2015" name="MBio">
        <title>Covalent Modification of Bacteriophage T4 DNA Inhibits CRISPR-Cas9.</title>
        <authorList>
            <person name="Bryson A.L."/>
            <person name="Hwang Y."/>
            <person name="Sherrill-Mix S."/>
            <person name="Wu G.D."/>
            <person name="Lewis J.D."/>
            <person name="Black L."/>
            <person name="Clark T.A."/>
            <person name="Bushman F.D."/>
        </authorList>
    </citation>
    <scope>FUNCTION</scope>
</reference>
<reference key="6">
    <citation type="journal article" date="2005" name="J. Mol. Biol.">
        <title>Structural evidence of a passive base-flipping mechanism for AGT, an unusual GT-B glycosyltransferase.</title>
        <authorList>
            <person name="Lariviere L."/>
            <person name="Sommer N."/>
            <person name="Morera S."/>
        </authorList>
    </citation>
    <scope>X-RAY CRYSTALLOGRAPHY (1.73 ANGSTROMS) IN COMPLEX WITH SUBSTRATES</scope>
</reference>
<sequence length="400" mass="46704">MRICIFMARGLEGCGVTKFSLEQRDWFIKNGHEVTLVYAKDKSFTRTSSHDHKSFSIPVILAKEYDKALKLVNDCDILIINSVPATSVQEATINNYKKLLDNIKPSIRVVVYQHDHSVLSLRRNLGLEETVRRADVIFSHSDNGDFNKVLMKEWYPETVSLFDDIEEAPTVYNFQPPMDIVKVRSTYWKDVSEINMNINRWIGRTTTWKGFYQMFDFHEKFLKPAGKSTVMEGLERSPAFIAIKEKGIPYEYYGNREIDKMNLAPNQPAQILDCYINSEMLERMSKSGFGYQLSKLNQKYLQRSLEYTHLELGACGTIPVFWKSTGENLKFRVDNTPLTSHDSGIIWFDENDMESTFERIKELSSDRALYDREREKAYEFLYQHQDSSFCFKEQFDIITK</sequence>
<comment type="function">
    <text evidence="1 3">Catalyzes the transfer of glucose from uridine diphosphoglucose to 5-hydroxymethyl cytosine of T4 DNA to yield glucosyl 5-hydroxymethyl cytosine (glc-HMC) (PubMed:15381072). This DNA process seems to occur immediately after DNA synthesis since the DNA alpha-glucosyltransferase interacts with the clamp protein gp45 (PubMed:15381072). The glc-HMC modification protects the phage genome against its own nucleases and the host restriction endonuclease system (PubMed:15381072). The glc-HMC modification also protects against the host CRISPR-Cas9 defense system (PubMed:26081634).</text>
</comment>
<comment type="catalytic activity">
    <reaction evidence="4">
        <text>Transfers an alpha-D-glucosyl residue from UDP-glucose to a hydroxymethylcytosine residue in DNA.</text>
        <dbReference type="EC" id="2.4.1.26"/>
    </reaction>
</comment>
<comment type="pathway">
    <text>Genetic information processing; DNA modification.</text>
</comment>
<comment type="subunit">
    <text evidence="1 2">Interacts with clamp protein gp45.</text>
</comment>
<dbReference type="EC" id="2.4.1.26" evidence="4"/>
<dbReference type="EMBL" id="X01804">
    <property type="protein sequence ID" value="CAA25940.1"/>
    <property type="molecule type" value="Genomic_DNA"/>
</dbReference>
<dbReference type="EMBL" id="M10160">
    <property type="protein sequence ID" value="AAC05390.1"/>
    <property type="molecule type" value="Genomic_DNA"/>
</dbReference>
<dbReference type="EMBL" id="AF158101">
    <property type="protein sequence ID" value="AAD42527.1"/>
    <property type="molecule type" value="Genomic_DNA"/>
</dbReference>
<dbReference type="PIR" id="A00577">
    <property type="entry name" value="XUBPA4"/>
</dbReference>
<dbReference type="PDB" id="1XV5">
    <property type="method" value="X-ray"/>
    <property type="resolution" value="1.73 A"/>
    <property type="chains" value="A=1-400"/>
</dbReference>
<dbReference type="PDB" id="1Y6F">
    <property type="method" value="X-ray"/>
    <property type="resolution" value="2.40 A"/>
    <property type="chains" value="A/B=1-400"/>
</dbReference>
<dbReference type="PDB" id="1Y6G">
    <property type="method" value="X-ray"/>
    <property type="resolution" value="2.80 A"/>
    <property type="chains" value="A/B=1-400"/>
</dbReference>
<dbReference type="PDB" id="1Y8Z">
    <property type="method" value="X-ray"/>
    <property type="resolution" value="1.90 A"/>
    <property type="chains" value="A/B=1-400"/>
</dbReference>
<dbReference type="PDB" id="1YA6">
    <property type="method" value="X-ray"/>
    <property type="resolution" value="2.40 A"/>
    <property type="chains" value="A/B=1-400"/>
</dbReference>
<dbReference type="PDBsum" id="1XV5"/>
<dbReference type="PDBsum" id="1Y6F"/>
<dbReference type="PDBsum" id="1Y6G"/>
<dbReference type="PDBsum" id="1Y8Z"/>
<dbReference type="PDBsum" id="1YA6"/>
<dbReference type="SMR" id="P04519"/>
<dbReference type="CAZy" id="GT72">
    <property type="family name" value="Glycosyltransferase Family 72"/>
</dbReference>
<dbReference type="KEGG" id="vg:1258823"/>
<dbReference type="OrthoDB" id="2660at10239"/>
<dbReference type="UniPathway" id="UPA00198"/>
<dbReference type="EvolutionaryTrace" id="P04519"/>
<dbReference type="Proteomes" id="UP000009087">
    <property type="component" value="Segment"/>
</dbReference>
<dbReference type="GO" id="GO:0033820">
    <property type="term" value="F:DNA alpha-glucosyltransferase activity"/>
    <property type="evidence" value="ECO:0000314"/>
    <property type="project" value="UniProtKB"/>
</dbReference>
<dbReference type="GO" id="GO:0006304">
    <property type="term" value="P:DNA modification"/>
    <property type="evidence" value="ECO:0007669"/>
    <property type="project" value="UniProtKB-UniPathway"/>
</dbReference>
<dbReference type="GO" id="GO:0099018">
    <property type="term" value="P:symbiont-mediated evasion of host restriction-modification system"/>
    <property type="evidence" value="ECO:0007669"/>
    <property type="project" value="UniProtKB-KW"/>
</dbReference>
<dbReference type="GO" id="GO:0039504">
    <property type="term" value="P:symbiont-mediated suppression of host adaptive immune response"/>
    <property type="evidence" value="ECO:0007669"/>
    <property type="project" value="UniProtKB-KW"/>
</dbReference>
<dbReference type="GO" id="GO:0098672">
    <property type="term" value="P:symbiont-mediated suppression of host CRISPR-cas system"/>
    <property type="evidence" value="ECO:0007669"/>
    <property type="project" value="UniProtKB-KW"/>
</dbReference>
<dbReference type="GO" id="GO:0052170">
    <property type="term" value="P:symbiont-mediated suppression of host innate immune response"/>
    <property type="evidence" value="ECO:0007669"/>
    <property type="project" value="UniProtKB-KW"/>
</dbReference>
<dbReference type="FunFam" id="3.40.50.2000:FF:000172">
    <property type="entry name" value="DNA alpha-glucosyltransferase"/>
    <property type="match status" value="1"/>
</dbReference>
<dbReference type="Gene3D" id="3.40.50.2000">
    <property type="entry name" value="Glycogen Phosphorylase B"/>
    <property type="match status" value="2"/>
</dbReference>
<dbReference type="InterPro" id="IPR016223">
    <property type="entry name" value="DNA_alpha-glucosyltransferase"/>
</dbReference>
<dbReference type="Pfam" id="PF11440">
    <property type="entry name" value="AGT"/>
    <property type="match status" value="1"/>
</dbReference>
<dbReference type="PIRSF" id="PIRSF000471">
    <property type="entry name" value="DNA_alpha-glucosyltransferase"/>
    <property type="match status" value="1"/>
</dbReference>
<organism>
    <name type="scientific">Enterobacteria phage T4</name>
    <name type="common">Bacteriophage T4</name>
    <dbReference type="NCBI Taxonomy" id="10665"/>
    <lineage>
        <taxon>Viruses</taxon>
        <taxon>Duplodnaviria</taxon>
        <taxon>Heunggongvirae</taxon>
        <taxon>Uroviricota</taxon>
        <taxon>Caudoviricetes</taxon>
        <taxon>Straboviridae</taxon>
        <taxon>Tevenvirinae</taxon>
        <taxon>Tequatrovirus</taxon>
    </lineage>
</organism>
<protein>
    <recommendedName>
        <fullName>DNA alpha-glucosyltransferase</fullName>
        <shortName>AGT</shortName>
        <shortName>Alpha-GT</shortName>
        <ecNumber evidence="4">2.4.1.26</ecNumber>
    </recommendedName>
</protein>
<gene>
    <name type="primary">agt</name>
</gene>
<evidence type="ECO:0000269" key="1">
    <source>
    </source>
</evidence>
<evidence type="ECO:0000269" key="2">
    <source>
    </source>
</evidence>
<evidence type="ECO:0000269" key="3">
    <source>
    </source>
</evidence>
<evidence type="ECO:0000269" key="4">
    <source>
    </source>
</evidence>
<evidence type="ECO:0007829" key="5">
    <source>
        <dbReference type="PDB" id="1XV5"/>
    </source>
</evidence>
<evidence type="ECO:0007829" key="6">
    <source>
        <dbReference type="PDB" id="1Y8Z"/>
    </source>
</evidence>
<evidence type="ECO:0007829" key="7">
    <source>
        <dbReference type="PDB" id="1YA6"/>
    </source>
</evidence>
<proteinExistence type="evidence at protein level"/>
<keyword id="KW-0002">3D-structure</keyword>
<keyword id="KW-1257">CRISPR-cas system evasion by virus</keyword>
<keyword id="KW-0328">Glycosyltransferase</keyword>
<keyword id="KW-0945">Host-virus interaction</keyword>
<keyword id="KW-1080">Inhibition of host adaptive immune response by virus</keyword>
<keyword id="KW-1090">Inhibition of host innate immune response by virus</keyword>
<keyword id="KW-1185">Reference proteome</keyword>
<keyword id="KW-1258">Restriction-modification system evasion by virus</keyword>
<keyword id="KW-0808">Transferase</keyword>
<keyword id="KW-0899">Viral immunoevasion</keyword>
<accession>P04519</accession>